<sequence length="180" mass="20409">MQEKAVVLDDQMIRRALTRISHEIVERNKGVDNCVLVGIKTRGIFIAQRLAERIGQIEGKEMEVGELDITLYRDDLTLQSKNKEPLVKGSDIPVDITKKKVILVDDVLYTGRTVRAAMDALMDLGRPSQIQLAVLVDRGHRELPIRADYVGKNIPTSSEERIEVDLQETDQQDRVSIYDK</sequence>
<dbReference type="EC" id="2.4.2.9" evidence="1"/>
<dbReference type="EMBL" id="CP001215">
    <property type="protein sequence ID" value="ACP13988.1"/>
    <property type="molecule type" value="Genomic_DNA"/>
</dbReference>
<dbReference type="RefSeq" id="WP_001156491.1">
    <property type="nucleotide sequence ID" value="NC_012581.1"/>
</dbReference>
<dbReference type="SMR" id="C3L735"/>
<dbReference type="GeneID" id="75087028"/>
<dbReference type="KEGG" id="bah:BAMEG_0599"/>
<dbReference type="HOGENOM" id="CLU_094234_2_1_9"/>
<dbReference type="GO" id="GO:0003723">
    <property type="term" value="F:RNA binding"/>
    <property type="evidence" value="ECO:0007669"/>
    <property type="project" value="UniProtKB-UniRule"/>
</dbReference>
<dbReference type="GO" id="GO:0004845">
    <property type="term" value="F:uracil phosphoribosyltransferase activity"/>
    <property type="evidence" value="ECO:0007669"/>
    <property type="project" value="UniProtKB-UniRule"/>
</dbReference>
<dbReference type="GO" id="GO:0006353">
    <property type="term" value="P:DNA-templated transcription termination"/>
    <property type="evidence" value="ECO:0007669"/>
    <property type="project" value="UniProtKB-UniRule"/>
</dbReference>
<dbReference type="CDD" id="cd06223">
    <property type="entry name" value="PRTases_typeI"/>
    <property type="match status" value="1"/>
</dbReference>
<dbReference type="FunFam" id="3.40.50.2020:FF:000020">
    <property type="entry name" value="Bifunctional protein PyrR"/>
    <property type="match status" value="1"/>
</dbReference>
<dbReference type="Gene3D" id="3.40.50.2020">
    <property type="match status" value="1"/>
</dbReference>
<dbReference type="HAMAP" id="MF_01219">
    <property type="entry name" value="PyrR"/>
    <property type="match status" value="1"/>
</dbReference>
<dbReference type="InterPro" id="IPR000836">
    <property type="entry name" value="PRibTrfase_dom"/>
</dbReference>
<dbReference type="InterPro" id="IPR029057">
    <property type="entry name" value="PRTase-like"/>
</dbReference>
<dbReference type="InterPro" id="IPR023050">
    <property type="entry name" value="PyrR"/>
</dbReference>
<dbReference type="InterPro" id="IPR050137">
    <property type="entry name" value="PyrR_bifunctional"/>
</dbReference>
<dbReference type="NCBIfam" id="NF003545">
    <property type="entry name" value="PRK05205.1-1"/>
    <property type="match status" value="1"/>
</dbReference>
<dbReference type="NCBIfam" id="NF003547">
    <property type="entry name" value="PRK05205.1-3"/>
    <property type="match status" value="1"/>
</dbReference>
<dbReference type="NCBIfam" id="NF003548">
    <property type="entry name" value="PRK05205.1-4"/>
    <property type="match status" value="1"/>
</dbReference>
<dbReference type="NCBIfam" id="NF003549">
    <property type="entry name" value="PRK05205.1-5"/>
    <property type="match status" value="1"/>
</dbReference>
<dbReference type="PANTHER" id="PTHR11608">
    <property type="entry name" value="BIFUNCTIONAL PROTEIN PYRR"/>
    <property type="match status" value="1"/>
</dbReference>
<dbReference type="PANTHER" id="PTHR11608:SF0">
    <property type="entry name" value="BIFUNCTIONAL PROTEIN PYRR"/>
    <property type="match status" value="1"/>
</dbReference>
<dbReference type="Pfam" id="PF00156">
    <property type="entry name" value="Pribosyltran"/>
    <property type="match status" value="1"/>
</dbReference>
<dbReference type="SUPFAM" id="SSF53271">
    <property type="entry name" value="PRTase-like"/>
    <property type="match status" value="1"/>
</dbReference>
<protein>
    <recommendedName>
        <fullName evidence="1">Bifunctional protein PyrR</fullName>
    </recommendedName>
    <domain>
        <recommendedName>
            <fullName evidence="1">Pyrimidine operon regulatory protein</fullName>
        </recommendedName>
    </domain>
    <domain>
        <recommendedName>
            <fullName evidence="1">Uracil phosphoribosyltransferase</fullName>
            <shortName evidence="1">UPRTase</shortName>
            <ecNumber evidence="1">2.4.2.9</ecNumber>
        </recommendedName>
    </domain>
</protein>
<reference key="1">
    <citation type="submission" date="2008-10" db="EMBL/GenBank/DDBJ databases">
        <title>Genome sequence of Bacillus anthracis str. CDC 684.</title>
        <authorList>
            <person name="Dodson R.J."/>
            <person name="Munk A.C."/>
            <person name="Brettin T."/>
            <person name="Bruce D."/>
            <person name="Detter C."/>
            <person name="Tapia R."/>
            <person name="Han C."/>
            <person name="Sutton G."/>
            <person name="Sims D."/>
        </authorList>
    </citation>
    <scope>NUCLEOTIDE SEQUENCE [LARGE SCALE GENOMIC DNA]</scope>
    <source>
        <strain>CDC 684 / NRRL 3495</strain>
    </source>
</reference>
<organism>
    <name type="scientific">Bacillus anthracis (strain CDC 684 / NRRL 3495)</name>
    <dbReference type="NCBI Taxonomy" id="568206"/>
    <lineage>
        <taxon>Bacteria</taxon>
        <taxon>Bacillati</taxon>
        <taxon>Bacillota</taxon>
        <taxon>Bacilli</taxon>
        <taxon>Bacillales</taxon>
        <taxon>Bacillaceae</taxon>
        <taxon>Bacillus</taxon>
        <taxon>Bacillus cereus group</taxon>
    </lineage>
</organism>
<evidence type="ECO:0000255" key="1">
    <source>
        <dbReference type="HAMAP-Rule" id="MF_01219"/>
    </source>
</evidence>
<name>PYRR_BACAC</name>
<proteinExistence type="inferred from homology"/>
<feature type="chain" id="PRO_1000164842" description="Bifunctional protein PyrR">
    <location>
        <begin position="1"/>
        <end position="180"/>
    </location>
</feature>
<feature type="short sequence motif" description="PRPP-binding" evidence="1">
    <location>
        <begin position="101"/>
        <end position="113"/>
    </location>
</feature>
<gene>
    <name evidence="1" type="primary">pyrR</name>
    <name type="ordered locus">BAMEG_0599</name>
</gene>
<keyword id="KW-0328">Glycosyltransferase</keyword>
<keyword id="KW-0694">RNA-binding</keyword>
<keyword id="KW-0804">Transcription</keyword>
<keyword id="KW-0805">Transcription regulation</keyword>
<keyword id="KW-0806">Transcription termination</keyword>
<keyword id="KW-0808">Transferase</keyword>
<accession>C3L735</accession>
<comment type="function">
    <text evidence="1">Regulates transcriptional attenuation of the pyrimidine nucleotide (pyr) operon by binding in a uridine-dependent manner to specific sites on pyr mRNA. This disrupts an antiterminator hairpin in the RNA and favors formation of a downstream transcription terminator, leading to a reduced expression of downstream genes.</text>
</comment>
<comment type="function">
    <text evidence="1">Also displays a weak uracil phosphoribosyltransferase activity which is not physiologically significant.</text>
</comment>
<comment type="catalytic activity">
    <reaction evidence="1">
        <text>UMP + diphosphate = 5-phospho-alpha-D-ribose 1-diphosphate + uracil</text>
        <dbReference type="Rhea" id="RHEA:13017"/>
        <dbReference type="ChEBI" id="CHEBI:17568"/>
        <dbReference type="ChEBI" id="CHEBI:33019"/>
        <dbReference type="ChEBI" id="CHEBI:57865"/>
        <dbReference type="ChEBI" id="CHEBI:58017"/>
        <dbReference type="EC" id="2.4.2.9"/>
    </reaction>
</comment>
<comment type="subunit">
    <text evidence="1">Homodimer and homohexamer; in equilibrium.</text>
</comment>
<comment type="similarity">
    <text evidence="1">Belongs to the purine/pyrimidine phosphoribosyltransferase family. PyrR subfamily.</text>
</comment>